<feature type="chain" id="PRO_1000213571" description="Ornithine carbamoyltransferase">
    <location>
        <begin position="1"/>
        <end position="333"/>
    </location>
</feature>
<feature type="binding site" evidence="2">
    <location>
        <begin position="57"/>
        <end position="60"/>
    </location>
    <ligand>
        <name>carbamoyl phosphate</name>
        <dbReference type="ChEBI" id="CHEBI:58228"/>
    </ligand>
</feature>
<feature type="binding site" evidence="2">
    <location>
        <position position="108"/>
    </location>
    <ligand>
        <name>carbamoyl phosphate</name>
        <dbReference type="ChEBI" id="CHEBI:58228"/>
    </ligand>
</feature>
<feature type="binding site" evidence="2">
    <location>
        <begin position="135"/>
        <end position="138"/>
    </location>
    <ligand>
        <name>carbamoyl phosphate</name>
        <dbReference type="ChEBI" id="CHEBI:58228"/>
    </ligand>
</feature>
<feature type="binding site" evidence="2">
    <location>
        <position position="168"/>
    </location>
    <ligand>
        <name>L-ornithine</name>
        <dbReference type="ChEBI" id="CHEBI:46911"/>
    </ligand>
</feature>
<feature type="binding site" evidence="2">
    <location>
        <position position="232"/>
    </location>
    <ligand>
        <name>L-ornithine</name>
        <dbReference type="ChEBI" id="CHEBI:46911"/>
    </ligand>
</feature>
<feature type="binding site" evidence="2">
    <location>
        <begin position="236"/>
        <end position="237"/>
    </location>
    <ligand>
        <name>L-ornithine</name>
        <dbReference type="ChEBI" id="CHEBI:46911"/>
    </ligand>
</feature>
<feature type="binding site" evidence="2">
    <location>
        <begin position="274"/>
        <end position="275"/>
    </location>
    <ligand>
        <name>carbamoyl phosphate</name>
        <dbReference type="ChEBI" id="CHEBI:58228"/>
    </ligand>
</feature>
<feature type="binding site" evidence="2">
    <location>
        <position position="319"/>
    </location>
    <ligand>
        <name>carbamoyl phosphate</name>
        <dbReference type="ChEBI" id="CHEBI:58228"/>
    </ligand>
</feature>
<evidence type="ECO:0000250" key="1"/>
<evidence type="ECO:0000255" key="2">
    <source>
        <dbReference type="HAMAP-Rule" id="MF_01109"/>
    </source>
</evidence>
<gene>
    <name evidence="2" type="primary">arcB</name>
    <name type="ordered locus">PEPE_1631</name>
</gene>
<name>OTC_PEDPA</name>
<sequence>MSFNLRNRSFLTLSDFSTREMEYMLNLAEDLKKAKYAGYEGNRLAGKNIALIFEKDSTRTRCAFEVGAKDEGAHVTYLGPSGSHIGYKESVKDTARVLGGMFDGIEYRGFSQRSAETLAEYSGVPVWNGLTDEDHPTQVLADFLTAKEVLKKEYKDIKFAFVGDGQDNVSNALMLGAAVMGMEYHVVTPKELEPTKDVLDKANAIAAKTGGKIVVENDVKAGVKNMDVIYTDVWVSMGEPDEMWQKRIKLLKPYQVTKEVMEATENPNAIFEHCLPAFHNTDTSIGKKIEEKYGLSEMEVTDEVFESSQSVVFQEAENRMHTIKAVMVATLGD</sequence>
<reference key="1">
    <citation type="journal article" date="2006" name="Proc. Natl. Acad. Sci. U.S.A.">
        <title>Comparative genomics of the lactic acid bacteria.</title>
        <authorList>
            <person name="Makarova K.S."/>
            <person name="Slesarev A."/>
            <person name="Wolf Y.I."/>
            <person name="Sorokin A."/>
            <person name="Mirkin B."/>
            <person name="Koonin E.V."/>
            <person name="Pavlov A."/>
            <person name="Pavlova N."/>
            <person name="Karamychev V."/>
            <person name="Polouchine N."/>
            <person name="Shakhova V."/>
            <person name="Grigoriev I."/>
            <person name="Lou Y."/>
            <person name="Rohksar D."/>
            <person name="Lucas S."/>
            <person name="Huang K."/>
            <person name="Goodstein D.M."/>
            <person name="Hawkins T."/>
            <person name="Plengvidhya V."/>
            <person name="Welker D."/>
            <person name="Hughes J."/>
            <person name="Goh Y."/>
            <person name="Benson A."/>
            <person name="Baldwin K."/>
            <person name="Lee J.-H."/>
            <person name="Diaz-Muniz I."/>
            <person name="Dosti B."/>
            <person name="Smeianov V."/>
            <person name="Wechter W."/>
            <person name="Barabote R."/>
            <person name="Lorca G."/>
            <person name="Altermann E."/>
            <person name="Barrangou R."/>
            <person name="Ganesan B."/>
            <person name="Xie Y."/>
            <person name="Rawsthorne H."/>
            <person name="Tamir D."/>
            <person name="Parker C."/>
            <person name="Breidt F."/>
            <person name="Broadbent J.R."/>
            <person name="Hutkins R."/>
            <person name="O'Sullivan D."/>
            <person name="Steele J."/>
            <person name="Unlu G."/>
            <person name="Saier M.H. Jr."/>
            <person name="Klaenhammer T."/>
            <person name="Richardson P."/>
            <person name="Kozyavkin S."/>
            <person name="Weimer B.C."/>
            <person name="Mills D.A."/>
        </authorList>
    </citation>
    <scope>NUCLEOTIDE SEQUENCE [LARGE SCALE GENOMIC DNA]</scope>
    <source>
        <strain>ATCC 25745 / CCUG 21536 / LMG 10740 / 183-1w</strain>
    </source>
</reference>
<dbReference type="EC" id="2.1.3.3" evidence="2"/>
<dbReference type="EMBL" id="CP000422">
    <property type="protein sequence ID" value="ABJ68652.1"/>
    <property type="molecule type" value="Genomic_DNA"/>
</dbReference>
<dbReference type="SMR" id="Q03DS0"/>
<dbReference type="STRING" id="278197.PEPE_1631"/>
<dbReference type="GeneID" id="33062408"/>
<dbReference type="KEGG" id="ppe:PEPE_1631"/>
<dbReference type="eggNOG" id="COG0078">
    <property type="taxonomic scope" value="Bacteria"/>
</dbReference>
<dbReference type="HOGENOM" id="CLU_043846_3_1_9"/>
<dbReference type="OrthoDB" id="9802587at2"/>
<dbReference type="UniPathway" id="UPA00254">
    <property type="reaction ID" value="UER00365"/>
</dbReference>
<dbReference type="Proteomes" id="UP000000773">
    <property type="component" value="Chromosome"/>
</dbReference>
<dbReference type="GO" id="GO:0005737">
    <property type="term" value="C:cytoplasm"/>
    <property type="evidence" value="ECO:0007669"/>
    <property type="project" value="UniProtKB-SubCell"/>
</dbReference>
<dbReference type="GO" id="GO:0016597">
    <property type="term" value="F:amino acid binding"/>
    <property type="evidence" value="ECO:0007669"/>
    <property type="project" value="InterPro"/>
</dbReference>
<dbReference type="GO" id="GO:0004585">
    <property type="term" value="F:ornithine carbamoyltransferase activity"/>
    <property type="evidence" value="ECO:0007669"/>
    <property type="project" value="UniProtKB-UniRule"/>
</dbReference>
<dbReference type="GO" id="GO:0042450">
    <property type="term" value="P:arginine biosynthetic process via ornithine"/>
    <property type="evidence" value="ECO:0007669"/>
    <property type="project" value="TreeGrafter"/>
</dbReference>
<dbReference type="GO" id="GO:0019547">
    <property type="term" value="P:arginine catabolic process to ornithine"/>
    <property type="evidence" value="ECO:0007669"/>
    <property type="project" value="UniProtKB-UniRule"/>
</dbReference>
<dbReference type="GO" id="GO:0019240">
    <property type="term" value="P:citrulline biosynthetic process"/>
    <property type="evidence" value="ECO:0007669"/>
    <property type="project" value="TreeGrafter"/>
</dbReference>
<dbReference type="FunFam" id="3.40.50.1370:FF:000008">
    <property type="entry name" value="Ornithine carbamoyltransferase"/>
    <property type="match status" value="1"/>
</dbReference>
<dbReference type="Gene3D" id="3.40.50.1370">
    <property type="entry name" value="Aspartate/ornithine carbamoyltransferase"/>
    <property type="match status" value="2"/>
</dbReference>
<dbReference type="HAMAP" id="MF_01109">
    <property type="entry name" value="OTCase"/>
    <property type="match status" value="1"/>
</dbReference>
<dbReference type="InterPro" id="IPR006132">
    <property type="entry name" value="Asp/Orn_carbamoyltranf_P-bd"/>
</dbReference>
<dbReference type="InterPro" id="IPR006130">
    <property type="entry name" value="Asp/Orn_carbamoylTrfase"/>
</dbReference>
<dbReference type="InterPro" id="IPR036901">
    <property type="entry name" value="Asp/Orn_carbamoylTrfase_sf"/>
</dbReference>
<dbReference type="InterPro" id="IPR006131">
    <property type="entry name" value="Asp_carbamoyltransf_Asp/Orn-bd"/>
</dbReference>
<dbReference type="InterPro" id="IPR002292">
    <property type="entry name" value="Orn/put_carbamltrans"/>
</dbReference>
<dbReference type="InterPro" id="IPR024904">
    <property type="entry name" value="OTCase_ArgI"/>
</dbReference>
<dbReference type="NCBIfam" id="TIGR00658">
    <property type="entry name" value="orni_carb_tr"/>
    <property type="match status" value="1"/>
</dbReference>
<dbReference type="NCBIfam" id="NF003286">
    <property type="entry name" value="PRK04284.1"/>
    <property type="match status" value="1"/>
</dbReference>
<dbReference type="PANTHER" id="PTHR45753:SF2">
    <property type="entry name" value="ORNITHINE CARBAMOYLTRANSFERASE"/>
    <property type="match status" value="1"/>
</dbReference>
<dbReference type="PANTHER" id="PTHR45753">
    <property type="entry name" value="ORNITHINE CARBAMOYLTRANSFERASE, MITOCHONDRIAL"/>
    <property type="match status" value="1"/>
</dbReference>
<dbReference type="Pfam" id="PF00185">
    <property type="entry name" value="OTCace"/>
    <property type="match status" value="1"/>
</dbReference>
<dbReference type="Pfam" id="PF02729">
    <property type="entry name" value="OTCace_N"/>
    <property type="match status" value="1"/>
</dbReference>
<dbReference type="PRINTS" id="PR00100">
    <property type="entry name" value="AOTCASE"/>
</dbReference>
<dbReference type="PRINTS" id="PR00102">
    <property type="entry name" value="OTCASE"/>
</dbReference>
<dbReference type="SUPFAM" id="SSF53671">
    <property type="entry name" value="Aspartate/ornithine carbamoyltransferase"/>
    <property type="match status" value="1"/>
</dbReference>
<dbReference type="PROSITE" id="PS00097">
    <property type="entry name" value="CARBAMOYLTRANSFERASE"/>
    <property type="match status" value="1"/>
</dbReference>
<protein>
    <recommendedName>
        <fullName evidence="2">Ornithine carbamoyltransferase</fullName>
        <shortName evidence="2">OTCase</shortName>
        <ecNumber evidence="2">2.1.3.3</ecNumber>
    </recommendedName>
</protein>
<proteinExistence type="inferred from homology"/>
<keyword id="KW-0056">Arginine metabolism</keyword>
<keyword id="KW-0963">Cytoplasm</keyword>
<keyword id="KW-0808">Transferase</keyword>
<accession>Q03DS0</accession>
<organism>
    <name type="scientific">Pediococcus pentosaceus (strain ATCC 25745 / CCUG 21536 / LMG 10740 / 183-1w)</name>
    <dbReference type="NCBI Taxonomy" id="278197"/>
    <lineage>
        <taxon>Bacteria</taxon>
        <taxon>Bacillati</taxon>
        <taxon>Bacillota</taxon>
        <taxon>Bacilli</taxon>
        <taxon>Lactobacillales</taxon>
        <taxon>Lactobacillaceae</taxon>
        <taxon>Pediococcus</taxon>
    </lineage>
</organism>
<comment type="function">
    <text evidence="1">Reversibly catalyzes the transfer of the carbamoyl group from carbamoyl phosphate (CP) to the N(epsilon) atom of ornithine (ORN) to produce L-citrulline.</text>
</comment>
<comment type="catalytic activity">
    <reaction evidence="2">
        <text>carbamoyl phosphate + L-ornithine = L-citrulline + phosphate + H(+)</text>
        <dbReference type="Rhea" id="RHEA:19513"/>
        <dbReference type="ChEBI" id="CHEBI:15378"/>
        <dbReference type="ChEBI" id="CHEBI:43474"/>
        <dbReference type="ChEBI" id="CHEBI:46911"/>
        <dbReference type="ChEBI" id="CHEBI:57743"/>
        <dbReference type="ChEBI" id="CHEBI:58228"/>
        <dbReference type="EC" id="2.1.3.3"/>
    </reaction>
</comment>
<comment type="pathway">
    <text evidence="2">Amino-acid degradation; L-arginine degradation via ADI pathway; carbamoyl phosphate from L-arginine: step 2/2.</text>
</comment>
<comment type="subcellular location">
    <subcellularLocation>
        <location evidence="2">Cytoplasm</location>
    </subcellularLocation>
</comment>
<comment type="similarity">
    <text evidence="2">Belongs to the aspartate/ornithine carbamoyltransferase superfamily. OTCase family.</text>
</comment>